<feature type="chain" id="PRO_0000305519" description="Pantothenate synthetase">
    <location>
        <begin position="1"/>
        <end position="288"/>
    </location>
</feature>
<feature type="active site" description="Proton donor" evidence="1">
    <location>
        <position position="37"/>
    </location>
</feature>
<feature type="binding site" evidence="1">
    <location>
        <begin position="30"/>
        <end position="37"/>
    </location>
    <ligand>
        <name>ATP</name>
        <dbReference type="ChEBI" id="CHEBI:30616"/>
    </ligand>
</feature>
<feature type="binding site" evidence="1">
    <location>
        <position position="61"/>
    </location>
    <ligand>
        <name>(R)-pantoate</name>
        <dbReference type="ChEBI" id="CHEBI:15980"/>
    </ligand>
</feature>
<feature type="binding site" evidence="1">
    <location>
        <position position="61"/>
    </location>
    <ligand>
        <name>beta-alanine</name>
        <dbReference type="ChEBI" id="CHEBI:57966"/>
    </ligand>
</feature>
<feature type="binding site" evidence="1">
    <location>
        <begin position="148"/>
        <end position="151"/>
    </location>
    <ligand>
        <name>ATP</name>
        <dbReference type="ChEBI" id="CHEBI:30616"/>
    </ligand>
</feature>
<feature type="binding site" evidence="1">
    <location>
        <position position="154"/>
    </location>
    <ligand>
        <name>(R)-pantoate</name>
        <dbReference type="ChEBI" id="CHEBI:15980"/>
    </ligand>
</feature>
<feature type="binding site" evidence="1">
    <location>
        <position position="177"/>
    </location>
    <ligand>
        <name>ATP</name>
        <dbReference type="ChEBI" id="CHEBI:30616"/>
    </ligand>
</feature>
<feature type="binding site" evidence="1">
    <location>
        <begin position="185"/>
        <end position="188"/>
    </location>
    <ligand>
        <name>ATP</name>
        <dbReference type="ChEBI" id="CHEBI:30616"/>
    </ligand>
</feature>
<accession>Q4FVG7</accession>
<proteinExistence type="inferred from homology"/>
<evidence type="ECO:0000255" key="1">
    <source>
        <dbReference type="HAMAP-Rule" id="MF_00158"/>
    </source>
</evidence>
<sequence length="288" mass="31663">MPMIHHHISDLRAALQPYRAAPRIALVPTMGNLHEGHLELVNIAKQHADIVVVSIFVNPTQFGVGEDFDSYPRTLDEDVAKLATVGADYVFAPSIDEMYPVLPPPTTILAGTITEQLCGKTRPTHFDGVGIVVSKLFNIVQPNVAVFGQKDYQQLAIIKQLVRDLSYSIEIIGAPIVRAADGLALSSRNQYLSESERQIAPILQQELQYLAKQITDKQQPLDVLLTAARERITSAGFIIDYLEIKTAELTAVDDDSVNEHQELVVLVAAGLGRARLLDNQLVTINKSL</sequence>
<protein>
    <recommendedName>
        <fullName evidence="1">Pantothenate synthetase</fullName>
        <shortName evidence="1">PS</shortName>
        <ecNumber evidence="1">6.3.2.1</ecNumber>
    </recommendedName>
    <alternativeName>
        <fullName evidence="1">Pantoate--beta-alanine ligase</fullName>
    </alternativeName>
    <alternativeName>
        <fullName evidence="1">Pantoate-activating enzyme</fullName>
    </alternativeName>
</protein>
<gene>
    <name evidence="1" type="primary">panC</name>
    <name type="ordered locus">Psyc_0117</name>
</gene>
<keyword id="KW-0067">ATP-binding</keyword>
<keyword id="KW-0963">Cytoplasm</keyword>
<keyword id="KW-0436">Ligase</keyword>
<keyword id="KW-0547">Nucleotide-binding</keyword>
<keyword id="KW-0566">Pantothenate biosynthesis</keyword>
<keyword id="KW-1185">Reference proteome</keyword>
<dbReference type="EC" id="6.3.2.1" evidence="1"/>
<dbReference type="EMBL" id="CP000082">
    <property type="protein sequence ID" value="AAZ17991.1"/>
    <property type="molecule type" value="Genomic_DNA"/>
</dbReference>
<dbReference type="RefSeq" id="WP_011279430.1">
    <property type="nucleotide sequence ID" value="NC_007204.1"/>
</dbReference>
<dbReference type="SMR" id="Q4FVG7"/>
<dbReference type="STRING" id="259536.Psyc_0117"/>
<dbReference type="KEGG" id="par:Psyc_0117"/>
<dbReference type="eggNOG" id="COG0414">
    <property type="taxonomic scope" value="Bacteria"/>
</dbReference>
<dbReference type="HOGENOM" id="CLU_047148_0_0_6"/>
<dbReference type="OrthoDB" id="9773087at2"/>
<dbReference type="UniPathway" id="UPA00028">
    <property type="reaction ID" value="UER00005"/>
</dbReference>
<dbReference type="Proteomes" id="UP000000546">
    <property type="component" value="Chromosome"/>
</dbReference>
<dbReference type="GO" id="GO:0005829">
    <property type="term" value="C:cytosol"/>
    <property type="evidence" value="ECO:0007669"/>
    <property type="project" value="TreeGrafter"/>
</dbReference>
<dbReference type="GO" id="GO:0005524">
    <property type="term" value="F:ATP binding"/>
    <property type="evidence" value="ECO:0007669"/>
    <property type="project" value="UniProtKB-KW"/>
</dbReference>
<dbReference type="GO" id="GO:0004592">
    <property type="term" value="F:pantoate-beta-alanine ligase activity"/>
    <property type="evidence" value="ECO:0007669"/>
    <property type="project" value="UniProtKB-UniRule"/>
</dbReference>
<dbReference type="GO" id="GO:0015940">
    <property type="term" value="P:pantothenate biosynthetic process"/>
    <property type="evidence" value="ECO:0007669"/>
    <property type="project" value="UniProtKB-UniRule"/>
</dbReference>
<dbReference type="CDD" id="cd00560">
    <property type="entry name" value="PanC"/>
    <property type="match status" value="1"/>
</dbReference>
<dbReference type="FunFam" id="3.40.50.620:FF:000013">
    <property type="entry name" value="Pantothenate synthetase"/>
    <property type="match status" value="1"/>
</dbReference>
<dbReference type="Gene3D" id="3.40.50.620">
    <property type="entry name" value="HUPs"/>
    <property type="match status" value="1"/>
</dbReference>
<dbReference type="Gene3D" id="3.30.1300.10">
    <property type="entry name" value="Pantoate-beta-alanine ligase, C-terminal domain"/>
    <property type="match status" value="1"/>
</dbReference>
<dbReference type="HAMAP" id="MF_00158">
    <property type="entry name" value="PanC"/>
    <property type="match status" value="1"/>
</dbReference>
<dbReference type="InterPro" id="IPR004821">
    <property type="entry name" value="Cyt_trans-like"/>
</dbReference>
<dbReference type="InterPro" id="IPR003721">
    <property type="entry name" value="Pantoate_ligase"/>
</dbReference>
<dbReference type="InterPro" id="IPR042176">
    <property type="entry name" value="Pantoate_ligase_C"/>
</dbReference>
<dbReference type="InterPro" id="IPR014729">
    <property type="entry name" value="Rossmann-like_a/b/a_fold"/>
</dbReference>
<dbReference type="NCBIfam" id="TIGR00125">
    <property type="entry name" value="cyt_tran_rel"/>
    <property type="match status" value="1"/>
</dbReference>
<dbReference type="NCBIfam" id="TIGR00018">
    <property type="entry name" value="panC"/>
    <property type="match status" value="1"/>
</dbReference>
<dbReference type="PANTHER" id="PTHR21299">
    <property type="entry name" value="CYTIDYLATE KINASE/PANTOATE-BETA-ALANINE LIGASE"/>
    <property type="match status" value="1"/>
</dbReference>
<dbReference type="PANTHER" id="PTHR21299:SF1">
    <property type="entry name" value="PANTOATE--BETA-ALANINE LIGASE"/>
    <property type="match status" value="1"/>
</dbReference>
<dbReference type="Pfam" id="PF02569">
    <property type="entry name" value="Pantoate_ligase"/>
    <property type="match status" value="1"/>
</dbReference>
<dbReference type="SUPFAM" id="SSF52374">
    <property type="entry name" value="Nucleotidylyl transferase"/>
    <property type="match status" value="1"/>
</dbReference>
<comment type="function">
    <text evidence="1">Catalyzes the condensation of pantoate with beta-alanine in an ATP-dependent reaction via a pantoyl-adenylate intermediate.</text>
</comment>
<comment type="catalytic activity">
    <reaction evidence="1">
        <text>(R)-pantoate + beta-alanine + ATP = (R)-pantothenate + AMP + diphosphate + H(+)</text>
        <dbReference type="Rhea" id="RHEA:10912"/>
        <dbReference type="ChEBI" id="CHEBI:15378"/>
        <dbReference type="ChEBI" id="CHEBI:15980"/>
        <dbReference type="ChEBI" id="CHEBI:29032"/>
        <dbReference type="ChEBI" id="CHEBI:30616"/>
        <dbReference type="ChEBI" id="CHEBI:33019"/>
        <dbReference type="ChEBI" id="CHEBI:57966"/>
        <dbReference type="ChEBI" id="CHEBI:456215"/>
        <dbReference type="EC" id="6.3.2.1"/>
    </reaction>
</comment>
<comment type="pathway">
    <text evidence="1">Cofactor biosynthesis; (R)-pantothenate biosynthesis; (R)-pantothenate from (R)-pantoate and beta-alanine: step 1/1.</text>
</comment>
<comment type="subunit">
    <text evidence="1">Homodimer.</text>
</comment>
<comment type="subcellular location">
    <subcellularLocation>
        <location evidence="1">Cytoplasm</location>
    </subcellularLocation>
</comment>
<comment type="miscellaneous">
    <text evidence="1">The reaction proceeds by a bi uni uni bi ping pong mechanism.</text>
</comment>
<comment type="similarity">
    <text evidence="1">Belongs to the pantothenate synthetase family.</text>
</comment>
<name>PANC_PSYA2</name>
<organism>
    <name type="scientific">Psychrobacter arcticus (strain DSM 17307 / VKM B-2377 / 273-4)</name>
    <dbReference type="NCBI Taxonomy" id="259536"/>
    <lineage>
        <taxon>Bacteria</taxon>
        <taxon>Pseudomonadati</taxon>
        <taxon>Pseudomonadota</taxon>
        <taxon>Gammaproteobacteria</taxon>
        <taxon>Moraxellales</taxon>
        <taxon>Moraxellaceae</taxon>
        <taxon>Psychrobacter</taxon>
    </lineage>
</organism>
<reference key="1">
    <citation type="journal article" date="2010" name="Appl. Environ. Microbiol.">
        <title>The genome sequence of Psychrobacter arcticus 273-4, a psychroactive Siberian permafrost bacterium, reveals mechanisms for adaptation to low-temperature growth.</title>
        <authorList>
            <person name="Ayala-del-Rio H.L."/>
            <person name="Chain P.S."/>
            <person name="Grzymski J.J."/>
            <person name="Ponder M.A."/>
            <person name="Ivanova N."/>
            <person name="Bergholz P.W."/>
            <person name="Di Bartolo G."/>
            <person name="Hauser L."/>
            <person name="Land M."/>
            <person name="Bakermans C."/>
            <person name="Rodrigues D."/>
            <person name="Klappenbach J."/>
            <person name="Zarka D."/>
            <person name="Larimer F."/>
            <person name="Richardson P."/>
            <person name="Murray A."/>
            <person name="Thomashow M."/>
            <person name="Tiedje J.M."/>
        </authorList>
    </citation>
    <scope>NUCLEOTIDE SEQUENCE [LARGE SCALE GENOMIC DNA]</scope>
    <source>
        <strain>DSM 17307 / VKM B-2377 / 273-4</strain>
    </source>
</reference>